<proteinExistence type="evidence at transcript level"/>
<feature type="transit peptide" description="Chloroplast" evidence="1">
    <location>
        <begin position="1"/>
        <end position="56"/>
    </location>
</feature>
<feature type="chain" id="PRO_0000249415" description="Small ribosomal subunit protein uS10c">
    <location>
        <begin position="57"/>
        <end position="191"/>
    </location>
</feature>
<organism>
    <name type="scientific">Arabidopsis thaliana</name>
    <name type="common">Mouse-ear cress</name>
    <dbReference type="NCBI Taxonomy" id="3702"/>
    <lineage>
        <taxon>Eukaryota</taxon>
        <taxon>Viridiplantae</taxon>
        <taxon>Streptophyta</taxon>
        <taxon>Embryophyta</taxon>
        <taxon>Tracheophyta</taxon>
        <taxon>Spermatophyta</taxon>
        <taxon>Magnoliopsida</taxon>
        <taxon>eudicotyledons</taxon>
        <taxon>Gunneridae</taxon>
        <taxon>Pentapetalae</taxon>
        <taxon>rosids</taxon>
        <taxon>malvids</taxon>
        <taxon>Brassicales</taxon>
        <taxon>Brassicaceae</taxon>
        <taxon>Camelineae</taxon>
        <taxon>Arabidopsis</taxon>
    </lineage>
</organism>
<keyword id="KW-0150">Chloroplast</keyword>
<keyword id="KW-0934">Plastid</keyword>
<keyword id="KW-1185">Reference proteome</keyword>
<keyword id="KW-0687">Ribonucleoprotein</keyword>
<keyword id="KW-0689">Ribosomal protein</keyword>
<keyword id="KW-0809">Transit peptide</keyword>
<accession>Q9LK61</accession>
<protein>
    <recommendedName>
        <fullName evidence="2">Small ribosomal subunit protein uS10c</fullName>
    </recommendedName>
    <alternativeName>
        <fullName>30S ribosomal protein S10, chloroplastic</fullName>
    </alternativeName>
</protein>
<reference key="1">
    <citation type="journal article" date="2000" name="DNA Res.">
        <title>Structural analysis of Arabidopsis thaliana chromosome 3. II. Sequence features of the 4,251,695 bp regions covered by 90 P1, TAC and BAC clones.</title>
        <authorList>
            <person name="Kaneko T."/>
            <person name="Katoh T."/>
            <person name="Sato S."/>
            <person name="Nakamura Y."/>
            <person name="Asamizu E."/>
            <person name="Tabata S."/>
        </authorList>
    </citation>
    <scope>NUCLEOTIDE SEQUENCE [LARGE SCALE GENOMIC DNA]</scope>
    <source>
        <strain>cv. Columbia</strain>
    </source>
</reference>
<reference key="2">
    <citation type="journal article" date="2017" name="Plant J.">
        <title>Araport11: a complete reannotation of the Arabidopsis thaliana reference genome.</title>
        <authorList>
            <person name="Cheng C.Y."/>
            <person name="Krishnakumar V."/>
            <person name="Chan A.P."/>
            <person name="Thibaud-Nissen F."/>
            <person name="Schobel S."/>
            <person name="Town C.D."/>
        </authorList>
    </citation>
    <scope>GENOME REANNOTATION</scope>
    <source>
        <strain>cv. Columbia</strain>
    </source>
</reference>
<reference key="3">
    <citation type="journal article" date="2003" name="Science">
        <title>Empirical analysis of transcriptional activity in the Arabidopsis genome.</title>
        <authorList>
            <person name="Yamada K."/>
            <person name="Lim J."/>
            <person name="Dale J.M."/>
            <person name="Chen H."/>
            <person name="Shinn P."/>
            <person name="Palm C.J."/>
            <person name="Southwick A.M."/>
            <person name="Wu H.C."/>
            <person name="Kim C.J."/>
            <person name="Nguyen M."/>
            <person name="Pham P.K."/>
            <person name="Cheuk R.F."/>
            <person name="Karlin-Newmann G."/>
            <person name="Liu S.X."/>
            <person name="Lam B."/>
            <person name="Sakano H."/>
            <person name="Wu T."/>
            <person name="Yu G."/>
            <person name="Miranda M."/>
            <person name="Quach H.L."/>
            <person name="Tripp M."/>
            <person name="Chang C.H."/>
            <person name="Lee J.M."/>
            <person name="Toriumi M.J."/>
            <person name="Chan M.M."/>
            <person name="Tang C.C."/>
            <person name="Onodera C.S."/>
            <person name="Deng J.M."/>
            <person name="Akiyama K."/>
            <person name="Ansari Y."/>
            <person name="Arakawa T."/>
            <person name="Banh J."/>
            <person name="Banno F."/>
            <person name="Bowser L."/>
            <person name="Brooks S.Y."/>
            <person name="Carninci P."/>
            <person name="Chao Q."/>
            <person name="Choy N."/>
            <person name="Enju A."/>
            <person name="Goldsmith A.D."/>
            <person name="Gurjal M."/>
            <person name="Hansen N.F."/>
            <person name="Hayashizaki Y."/>
            <person name="Johnson-Hopson C."/>
            <person name="Hsuan V.W."/>
            <person name="Iida K."/>
            <person name="Karnes M."/>
            <person name="Khan S."/>
            <person name="Koesema E."/>
            <person name="Ishida J."/>
            <person name="Jiang P.X."/>
            <person name="Jones T."/>
            <person name="Kawai J."/>
            <person name="Kamiya A."/>
            <person name="Meyers C."/>
            <person name="Nakajima M."/>
            <person name="Narusaka M."/>
            <person name="Seki M."/>
            <person name="Sakurai T."/>
            <person name="Satou M."/>
            <person name="Tamse R."/>
            <person name="Vaysberg M."/>
            <person name="Wallender E.K."/>
            <person name="Wong C."/>
            <person name="Yamamura Y."/>
            <person name="Yuan S."/>
            <person name="Shinozaki K."/>
            <person name="Davis R.W."/>
            <person name="Theologis A."/>
            <person name="Ecker J.R."/>
        </authorList>
    </citation>
    <scope>NUCLEOTIDE SEQUENCE [LARGE SCALE MRNA]</scope>
    <source>
        <strain>cv. Columbia</strain>
    </source>
</reference>
<reference key="4">
    <citation type="journal article" date="2023" name="Plant Cell">
        <title>An updated nomenclature for plant ribosomal protein genes.</title>
        <authorList>
            <person name="Scarpin M.R."/>
            <person name="Busche M."/>
            <person name="Martinez R.E."/>
            <person name="Harper L.C."/>
            <person name="Reiser L."/>
            <person name="Szakonyi D."/>
            <person name="Merchante C."/>
            <person name="Lan T."/>
            <person name="Xiong W."/>
            <person name="Mo B."/>
            <person name="Tang G."/>
            <person name="Chen X."/>
            <person name="Bailey-Serres J."/>
            <person name="Browning K.S."/>
            <person name="Brunkard J.O."/>
        </authorList>
    </citation>
    <scope>NOMENCLATURE</scope>
</reference>
<sequence length="191" mass="20837">MAVSTVSSFLLPSFGIPSSSPSSTRLKVSLLPSSSTHGGLSSCVLTKPSVSLTKVFAVPDTLDPTPEILDEPASEVPSSSSISVDADKMAPKQKIRIKLRSYWVPLIEDSCKQILDAARNTNAKTMGPVPLPTKKRIYCVLKSPHVHKDARFHFEIRTHQRMIDILYPTAQTIDSLMQLDLPAGVDVEVKL</sequence>
<dbReference type="EMBL" id="AP000375">
    <property type="protein sequence ID" value="BAB01403.1"/>
    <property type="molecule type" value="Genomic_DNA"/>
</dbReference>
<dbReference type="EMBL" id="CP002686">
    <property type="protein sequence ID" value="AEE75298.1"/>
    <property type="molecule type" value="Genomic_DNA"/>
</dbReference>
<dbReference type="EMBL" id="CP002686">
    <property type="protein sequence ID" value="AEE75299.1"/>
    <property type="molecule type" value="Genomic_DNA"/>
</dbReference>
<dbReference type="EMBL" id="CP002686">
    <property type="protein sequence ID" value="ANM63712.1"/>
    <property type="molecule type" value="Genomic_DNA"/>
</dbReference>
<dbReference type="EMBL" id="AF385700">
    <property type="protein sequence ID" value="AAK60293.1"/>
    <property type="molecule type" value="mRNA"/>
</dbReference>
<dbReference type="EMBL" id="AF428438">
    <property type="protein sequence ID" value="AAL16207.1"/>
    <property type="molecule type" value="mRNA"/>
</dbReference>
<dbReference type="EMBL" id="AY081727">
    <property type="protein sequence ID" value="AAL87380.1"/>
    <property type="molecule type" value="mRNA"/>
</dbReference>
<dbReference type="RefSeq" id="NP_001189875.1">
    <property type="nucleotide sequence ID" value="NM_001202946.1"/>
</dbReference>
<dbReference type="RefSeq" id="NP_001325784.1">
    <property type="nucleotide sequence ID" value="NM_001338033.1"/>
</dbReference>
<dbReference type="RefSeq" id="NP_187919.1">
    <property type="nucleotide sequence ID" value="NM_112151.4"/>
</dbReference>
<dbReference type="SMR" id="Q9LK61"/>
<dbReference type="BioGRID" id="5834">
    <property type="interactions" value="3"/>
</dbReference>
<dbReference type="FunCoup" id="Q9LK61">
    <property type="interactions" value="1029"/>
</dbReference>
<dbReference type="STRING" id="3702.Q9LK61"/>
<dbReference type="PaxDb" id="3702-AT3G13120.2"/>
<dbReference type="ProteomicsDB" id="226560"/>
<dbReference type="EnsemblPlants" id="AT3G13120.1">
    <property type="protein sequence ID" value="AT3G13120.1"/>
    <property type="gene ID" value="AT3G13120"/>
</dbReference>
<dbReference type="EnsemblPlants" id="AT3G13120.2">
    <property type="protein sequence ID" value="AT3G13120.2"/>
    <property type="gene ID" value="AT3G13120"/>
</dbReference>
<dbReference type="EnsemblPlants" id="AT3G13120.3">
    <property type="protein sequence ID" value="AT3G13120.3"/>
    <property type="gene ID" value="AT3G13120"/>
</dbReference>
<dbReference type="GeneID" id="820500"/>
<dbReference type="Gramene" id="AT3G13120.1">
    <property type="protein sequence ID" value="AT3G13120.1"/>
    <property type="gene ID" value="AT3G13120"/>
</dbReference>
<dbReference type="Gramene" id="AT3G13120.2">
    <property type="protein sequence ID" value="AT3G13120.2"/>
    <property type="gene ID" value="AT3G13120"/>
</dbReference>
<dbReference type="Gramene" id="AT3G13120.3">
    <property type="protein sequence ID" value="AT3G13120.3"/>
    <property type="gene ID" value="AT3G13120"/>
</dbReference>
<dbReference type="KEGG" id="ath:AT3G13120"/>
<dbReference type="Araport" id="AT3G13120"/>
<dbReference type="TAIR" id="AT3G13120">
    <property type="gene designation" value="PRPS10"/>
</dbReference>
<dbReference type="eggNOG" id="KOG0900">
    <property type="taxonomic scope" value="Eukaryota"/>
</dbReference>
<dbReference type="HOGENOM" id="CLU_096254_1_0_1"/>
<dbReference type="InParanoid" id="Q9LK61"/>
<dbReference type="OMA" id="GENFWIE"/>
<dbReference type="OrthoDB" id="366214at2759"/>
<dbReference type="PhylomeDB" id="Q9LK61"/>
<dbReference type="PRO" id="PR:Q9LK61"/>
<dbReference type="Proteomes" id="UP000006548">
    <property type="component" value="Chromosome 3"/>
</dbReference>
<dbReference type="ExpressionAtlas" id="Q9LK61">
    <property type="expression patterns" value="baseline and differential"/>
</dbReference>
<dbReference type="GO" id="GO:0009507">
    <property type="term" value="C:chloroplast"/>
    <property type="evidence" value="ECO:0007005"/>
    <property type="project" value="TAIR"/>
</dbReference>
<dbReference type="GO" id="GO:0009570">
    <property type="term" value="C:chloroplast stroma"/>
    <property type="evidence" value="ECO:0007005"/>
    <property type="project" value="TAIR"/>
</dbReference>
<dbReference type="GO" id="GO:0005829">
    <property type="term" value="C:cytosol"/>
    <property type="evidence" value="ECO:0007005"/>
    <property type="project" value="TAIR"/>
</dbReference>
<dbReference type="GO" id="GO:1990904">
    <property type="term" value="C:ribonucleoprotein complex"/>
    <property type="evidence" value="ECO:0007669"/>
    <property type="project" value="UniProtKB-KW"/>
</dbReference>
<dbReference type="GO" id="GO:0005840">
    <property type="term" value="C:ribosome"/>
    <property type="evidence" value="ECO:0007669"/>
    <property type="project" value="UniProtKB-KW"/>
</dbReference>
<dbReference type="GO" id="GO:0003729">
    <property type="term" value="F:mRNA binding"/>
    <property type="evidence" value="ECO:0000314"/>
    <property type="project" value="TAIR"/>
</dbReference>
<dbReference type="GO" id="GO:0003735">
    <property type="term" value="F:structural constituent of ribosome"/>
    <property type="evidence" value="ECO:0007669"/>
    <property type="project" value="InterPro"/>
</dbReference>
<dbReference type="GO" id="GO:0006412">
    <property type="term" value="P:translation"/>
    <property type="evidence" value="ECO:0007669"/>
    <property type="project" value="InterPro"/>
</dbReference>
<dbReference type="FunFam" id="3.30.70.600:FF:000001">
    <property type="entry name" value="30S ribosomal protein S10"/>
    <property type="match status" value="1"/>
</dbReference>
<dbReference type="Gene3D" id="3.30.70.600">
    <property type="entry name" value="Ribosomal protein S10 domain"/>
    <property type="match status" value="1"/>
</dbReference>
<dbReference type="HAMAP" id="MF_00508">
    <property type="entry name" value="Ribosomal_uS10"/>
    <property type="match status" value="1"/>
</dbReference>
<dbReference type="InterPro" id="IPR001848">
    <property type="entry name" value="Ribosomal_uS10"/>
</dbReference>
<dbReference type="InterPro" id="IPR018268">
    <property type="entry name" value="Ribosomal_uS10_CS"/>
</dbReference>
<dbReference type="InterPro" id="IPR027486">
    <property type="entry name" value="Ribosomal_uS10_dom"/>
</dbReference>
<dbReference type="InterPro" id="IPR036838">
    <property type="entry name" value="Ribosomal_uS10_dom_sf"/>
</dbReference>
<dbReference type="NCBIfam" id="NF001861">
    <property type="entry name" value="PRK00596.1"/>
    <property type="match status" value="1"/>
</dbReference>
<dbReference type="NCBIfam" id="TIGR01049">
    <property type="entry name" value="rpsJ_bact"/>
    <property type="match status" value="1"/>
</dbReference>
<dbReference type="PANTHER" id="PTHR11700">
    <property type="entry name" value="30S RIBOSOMAL PROTEIN S10 FAMILY MEMBER"/>
    <property type="match status" value="1"/>
</dbReference>
<dbReference type="Pfam" id="PF00338">
    <property type="entry name" value="Ribosomal_S10"/>
    <property type="match status" value="1"/>
</dbReference>
<dbReference type="PRINTS" id="PR00971">
    <property type="entry name" value="RIBOSOMALS10"/>
</dbReference>
<dbReference type="SMART" id="SM01403">
    <property type="entry name" value="Ribosomal_S10"/>
    <property type="match status" value="1"/>
</dbReference>
<dbReference type="SUPFAM" id="SSF54999">
    <property type="entry name" value="Ribosomal protein S10"/>
    <property type="match status" value="1"/>
</dbReference>
<dbReference type="PROSITE" id="PS00361">
    <property type="entry name" value="RIBOSOMAL_S10"/>
    <property type="match status" value="1"/>
</dbReference>
<comment type="subunit">
    <text evidence="1">Part of the 30S ribosomal subunit.</text>
</comment>
<comment type="subcellular location">
    <subcellularLocation>
        <location evidence="1">Plastid</location>
        <location evidence="1">Chloroplast</location>
    </subcellularLocation>
</comment>
<comment type="similarity">
    <text evidence="3">Belongs to the universal ribosomal protein uS10 family.</text>
</comment>
<gene>
    <name type="primary">RPS10</name>
    <name type="ordered locus">At3g13120</name>
    <name type="ORF">MJG19.7</name>
</gene>
<evidence type="ECO:0000250" key="1"/>
<evidence type="ECO:0000303" key="2">
    <source>
    </source>
</evidence>
<evidence type="ECO:0000305" key="3"/>
<name>RR10_ARATH</name>